<evidence type="ECO:0000255" key="1">
    <source>
        <dbReference type="HAMAP-Rule" id="MF_01302"/>
    </source>
</evidence>
<evidence type="ECO:0000305" key="2"/>
<sequence>MTTDVIADMLTRIRNANQRMLKTVNIPSSKMKLEIANILKEEGFISSFTVEGEVKKTITIELKYQGKQRVISGLKKISKPGLRVYAPANEIPQVLNGLGIAIVSTSQGIMTGKQARLSNIGGEVLAFVW</sequence>
<protein>
    <recommendedName>
        <fullName evidence="1">Small ribosomal subunit protein uS8</fullName>
    </recommendedName>
    <alternativeName>
        <fullName evidence="2">30S ribosomal protein S8</fullName>
    </alternativeName>
</protein>
<proteinExistence type="inferred from homology"/>
<comment type="function">
    <text evidence="1">One of the primary rRNA binding proteins, it binds directly to 16S rRNA central domain where it helps coordinate assembly of the platform of the 30S subunit.</text>
</comment>
<comment type="subunit">
    <text evidence="1">Part of the 30S ribosomal subunit. Contacts proteins S5 and S12.</text>
</comment>
<comment type="similarity">
    <text evidence="1">Belongs to the universal ribosomal protein uS8 family.</text>
</comment>
<keyword id="KW-1185">Reference proteome</keyword>
<keyword id="KW-0687">Ribonucleoprotein</keyword>
<keyword id="KW-0689">Ribosomal protein</keyword>
<keyword id="KW-0694">RNA-binding</keyword>
<keyword id="KW-0699">rRNA-binding</keyword>
<gene>
    <name evidence="1" type="primary">rpsH</name>
    <name type="ordered locus">Mfl137</name>
</gene>
<name>RS8_MESFL</name>
<organism>
    <name type="scientific">Mesoplasma florum (strain ATCC 33453 / NBRC 100688 / NCTC 11704 / L1)</name>
    <name type="common">Acholeplasma florum</name>
    <dbReference type="NCBI Taxonomy" id="265311"/>
    <lineage>
        <taxon>Bacteria</taxon>
        <taxon>Bacillati</taxon>
        <taxon>Mycoplasmatota</taxon>
        <taxon>Mollicutes</taxon>
        <taxon>Entomoplasmatales</taxon>
        <taxon>Entomoplasmataceae</taxon>
        <taxon>Mesoplasma</taxon>
    </lineage>
</organism>
<dbReference type="EMBL" id="AE017263">
    <property type="protein sequence ID" value="AAT75493.1"/>
    <property type="molecule type" value="Genomic_DNA"/>
</dbReference>
<dbReference type="RefSeq" id="WP_011183034.1">
    <property type="nucleotide sequence ID" value="NC_006055.1"/>
</dbReference>
<dbReference type="RefSeq" id="YP_053377.1">
    <property type="nucleotide sequence ID" value="NC_006055.1"/>
</dbReference>
<dbReference type="SMR" id="Q6F1Y0"/>
<dbReference type="STRING" id="265311.Mfl137"/>
<dbReference type="PaxDb" id="265311-Mfl137"/>
<dbReference type="EnsemblBacteria" id="AAT75493">
    <property type="protein sequence ID" value="AAT75493"/>
    <property type="gene ID" value="Mfl137"/>
</dbReference>
<dbReference type="GeneID" id="2897691"/>
<dbReference type="KEGG" id="mfl:Mfl137"/>
<dbReference type="PATRIC" id="fig|265311.5.peg.138"/>
<dbReference type="eggNOG" id="COG0096">
    <property type="taxonomic scope" value="Bacteria"/>
</dbReference>
<dbReference type="HOGENOM" id="CLU_098428_0_2_14"/>
<dbReference type="OrthoDB" id="9802617at2"/>
<dbReference type="Proteomes" id="UP000006647">
    <property type="component" value="Chromosome"/>
</dbReference>
<dbReference type="GO" id="GO:1990904">
    <property type="term" value="C:ribonucleoprotein complex"/>
    <property type="evidence" value="ECO:0007669"/>
    <property type="project" value="UniProtKB-KW"/>
</dbReference>
<dbReference type="GO" id="GO:0005840">
    <property type="term" value="C:ribosome"/>
    <property type="evidence" value="ECO:0007669"/>
    <property type="project" value="UniProtKB-KW"/>
</dbReference>
<dbReference type="GO" id="GO:0019843">
    <property type="term" value="F:rRNA binding"/>
    <property type="evidence" value="ECO:0007669"/>
    <property type="project" value="UniProtKB-UniRule"/>
</dbReference>
<dbReference type="GO" id="GO:0003735">
    <property type="term" value="F:structural constituent of ribosome"/>
    <property type="evidence" value="ECO:0007669"/>
    <property type="project" value="InterPro"/>
</dbReference>
<dbReference type="GO" id="GO:0006412">
    <property type="term" value="P:translation"/>
    <property type="evidence" value="ECO:0007669"/>
    <property type="project" value="UniProtKB-UniRule"/>
</dbReference>
<dbReference type="FunFam" id="3.30.1370.30:FF:000002">
    <property type="entry name" value="30S ribosomal protein S8"/>
    <property type="match status" value="1"/>
</dbReference>
<dbReference type="FunFam" id="3.30.1490.10:FF:000001">
    <property type="entry name" value="30S ribosomal protein S8"/>
    <property type="match status" value="1"/>
</dbReference>
<dbReference type="Gene3D" id="3.30.1370.30">
    <property type="match status" value="1"/>
</dbReference>
<dbReference type="Gene3D" id="3.30.1490.10">
    <property type="match status" value="1"/>
</dbReference>
<dbReference type="HAMAP" id="MF_01302_B">
    <property type="entry name" value="Ribosomal_uS8_B"/>
    <property type="match status" value="1"/>
</dbReference>
<dbReference type="InterPro" id="IPR000630">
    <property type="entry name" value="Ribosomal_uS8"/>
</dbReference>
<dbReference type="InterPro" id="IPR047863">
    <property type="entry name" value="Ribosomal_uS8_CS"/>
</dbReference>
<dbReference type="InterPro" id="IPR035987">
    <property type="entry name" value="Ribosomal_uS8_sf"/>
</dbReference>
<dbReference type="NCBIfam" id="NF001109">
    <property type="entry name" value="PRK00136.1"/>
    <property type="match status" value="1"/>
</dbReference>
<dbReference type="PANTHER" id="PTHR11758">
    <property type="entry name" value="40S RIBOSOMAL PROTEIN S15A"/>
    <property type="match status" value="1"/>
</dbReference>
<dbReference type="Pfam" id="PF00410">
    <property type="entry name" value="Ribosomal_S8"/>
    <property type="match status" value="1"/>
</dbReference>
<dbReference type="SUPFAM" id="SSF56047">
    <property type="entry name" value="Ribosomal protein S8"/>
    <property type="match status" value="1"/>
</dbReference>
<dbReference type="PROSITE" id="PS00053">
    <property type="entry name" value="RIBOSOMAL_S8"/>
    <property type="match status" value="1"/>
</dbReference>
<feature type="chain" id="PRO_0000126433" description="Small ribosomal subunit protein uS8">
    <location>
        <begin position="1"/>
        <end position="129"/>
    </location>
</feature>
<accession>Q6F1Y0</accession>
<reference key="1">
    <citation type="submission" date="2004-06" db="EMBL/GenBank/DDBJ databases">
        <authorList>
            <person name="Birren B.W."/>
            <person name="Stange-Thomann N."/>
            <person name="Hafez N."/>
            <person name="DeCaprio D."/>
            <person name="Fisher S."/>
            <person name="Butler J."/>
            <person name="Elkins T."/>
            <person name="Kodira C.D."/>
            <person name="Major J."/>
            <person name="Wang S."/>
            <person name="Nicol R."/>
            <person name="Nusbaum C."/>
        </authorList>
    </citation>
    <scope>NUCLEOTIDE SEQUENCE [LARGE SCALE GENOMIC DNA]</scope>
    <source>
        <strain>ATCC 33453 / NBRC 100688 / NCTC 11704 / L1</strain>
    </source>
</reference>